<feature type="chain" id="PRO_0000109244" description="UDP-N-acetylglucosamine--N-acetylmuramyl-(pentapeptide) pyrophosphoryl-undecaprenol N-acetylglucosamine transferase">
    <location>
        <begin position="1"/>
        <end position="356"/>
    </location>
</feature>
<feature type="binding site" evidence="1">
    <location>
        <begin position="15"/>
        <end position="17"/>
    </location>
    <ligand>
        <name>UDP-N-acetyl-alpha-D-glucosamine</name>
        <dbReference type="ChEBI" id="CHEBI:57705"/>
    </ligand>
</feature>
<feature type="binding site" evidence="1">
    <location>
        <position position="127"/>
    </location>
    <ligand>
        <name>UDP-N-acetyl-alpha-D-glucosamine</name>
        <dbReference type="ChEBI" id="CHEBI:57705"/>
    </ligand>
</feature>
<feature type="binding site" evidence="1">
    <location>
        <position position="163"/>
    </location>
    <ligand>
        <name>UDP-N-acetyl-alpha-D-glucosamine</name>
        <dbReference type="ChEBI" id="CHEBI:57705"/>
    </ligand>
</feature>
<feature type="binding site" evidence="1">
    <location>
        <position position="191"/>
    </location>
    <ligand>
        <name>UDP-N-acetyl-alpha-D-glucosamine</name>
        <dbReference type="ChEBI" id="CHEBI:57705"/>
    </ligand>
</feature>
<feature type="binding site" evidence="1">
    <location>
        <position position="244"/>
    </location>
    <ligand>
        <name>UDP-N-acetyl-alpha-D-glucosamine</name>
        <dbReference type="ChEBI" id="CHEBI:57705"/>
    </ligand>
</feature>
<feature type="binding site" evidence="1">
    <location>
        <begin position="263"/>
        <end position="268"/>
    </location>
    <ligand>
        <name>UDP-N-acetyl-alpha-D-glucosamine</name>
        <dbReference type="ChEBI" id="CHEBI:57705"/>
    </ligand>
</feature>
<feature type="binding site" evidence="1">
    <location>
        <position position="288"/>
    </location>
    <ligand>
        <name>UDP-N-acetyl-alpha-D-glucosamine</name>
        <dbReference type="ChEBI" id="CHEBI:57705"/>
    </ligand>
</feature>
<protein>
    <recommendedName>
        <fullName evidence="1">UDP-N-acetylglucosamine--N-acetylmuramyl-(pentapeptide) pyrophosphoryl-undecaprenol N-acetylglucosamine transferase</fullName>
        <ecNumber evidence="1">2.4.1.227</ecNumber>
    </recommendedName>
    <alternativeName>
        <fullName evidence="1">Undecaprenyl-PP-MurNAc-pentapeptide-UDPGlcNAc GlcNAc transferase</fullName>
    </alternativeName>
</protein>
<evidence type="ECO:0000255" key="1">
    <source>
        <dbReference type="HAMAP-Rule" id="MF_00033"/>
    </source>
</evidence>
<organism>
    <name type="scientific">Yersinia pestis</name>
    <dbReference type="NCBI Taxonomy" id="632"/>
    <lineage>
        <taxon>Bacteria</taxon>
        <taxon>Pseudomonadati</taxon>
        <taxon>Pseudomonadota</taxon>
        <taxon>Gammaproteobacteria</taxon>
        <taxon>Enterobacterales</taxon>
        <taxon>Yersiniaceae</taxon>
        <taxon>Yersinia</taxon>
    </lineage>
</organism>
<name>MURG_YERPE</name>
<keyword id="KW-0131">Cell cycle</keyword>
<keyword id="KW-0132">Cell division</keyword>
<keyword id="KW-0997">Cell inner membrane</keyword>
<keyword id="KW-1003">Cell membrane</keyword>
<keyword id="KW-0133">Cell shape</keyword>
<keyword id="KW-0961">Cell wall biogenesis/degradation</keyword>
<keyword id="KW-0328">Glycosyltransferase</keyword>
<keyword id="KW-0472">Membrane</keyword>
<keyword id="KW-0573">Peptidoglycan synthesis</keyword>
<keyword id="KW-1185">Reference proteome</keyword>
<keyword id="KW-0808">Transferase</keyword>
<gene>
    <name evidence="1" type="primary">murG</name>
    <name type="ordered locus">YPO0555</name>
    <name type="ordered locus">y3626</name>
    <name type="ordered locus">YP_3629</name>
</gene>
<sequence>MSGKTKRLMVMAGGTGGHVFPGLAVAHHLMAQGWQVRWLGTADRMEASLVPQHGIEIDFIKISGLRGKGLMAQLTAPIRIYRAVRQAQKIMRDYQPNVVLGMGGYVSGPGGLAAWLCGVPVVLHEQNGIAGLTNRWLARIAKKVLQAFPGAFPNADVVGNPVRTDVLALPLPAVRLSGREGPIRVLVIGGSQGARILNQTLPLVAASLGEQITLWHQVGKGALPEVSQAYQQAGQAGHLVVEFIDDMAAAYAWADVVVCRSGALTVSEVAAAGLPAIFVPFQHKDRQQYWNALPLEKAGAAKIIEQPQFTATSVSSLLASWDRATLLSMAERARSVAIPDATERVAAEVVAASKSA</sequence>
<reference key="1">
    <citation type="journal article" date="2001" name="Nature">
        <title>Genome sequence of Yersinia pestis, the causative agent of plague.</title>
        <authorList>
            <person name="Parkhill J."/>
            <person name="Wren B.W."/>
            <person name="Thomson N.R."/>
            <person name="Titball R.W."/>
            <person name="Holden M.T.G."/>
            <person name="Prentice M.B."/>
            <person name="Sebaihia M."/>
            <person name="James K.D."/>
            <person name="Churcher C.M."/>
            <person name="Mungall K.L."/>
            <person name="Baker S."/>
            <person name="Basham D."/>
            <person name="Bentley S.D."/>
            <person name="Brooks K."/>
            <person name="Cerdeno-Tarraga A.-M."/>
            <person name="Chillingworth T."/>
            <person name="Cronin A."/>
            <person name="Davies R.M."/>
            <person name="Davis P."/>
            <person name="Dougan G."/>
            <person name="Feltwell T."/>
            <person name="Hamlin N."/>
            <person name="Holroyd S."/>
            <person name="Jagels K."/>
            <person name="Karlyshev A.V."/>
            <person name="Leather S."/>
            <person name="Moule S."/>
            <person name="Oyston P.C.F."/>
            <person name="Quail M.A."/>
            <person name="Rutherford K.M."/>
            <person name="Simmonds M."/>
            <person name="Skelton J."/>
            <person name="Stevens K."/>
            <person name="Whitehead S."/>
            <person name="Barrell B.G."/>
        </authorList>
    </citation>
    <scope>NUCLEOTIDE SEQUENCE [LARGE SCALE GENOMIC DNA]</scope>
    <source>
        <strain>CO-92 / Biovar Orientalis</strain>
    </source>
</reference>
<reference key="2">
    <citation type="journal article" date="2002" name="J. Bacteriol.">
        <title>Genome sequence of Yersinia pestis KIM.</title>
        <authorList>
            <person name="Deng W."/>
            <person name="Burland V."/>
            <person name="Plunkett G. III"/>
            <person name="Boutin A."/>
            <person name="Mayhew G.F."/>
            <person name="Liss P."/>
            <person name="Perna N.T."/>
            <person name="Rose D.J."/>
            <person name="Mau B."/>
            <person name="Zhou S."/>
            <person name="Schwartz D.C."/>
            <person name="Fetherston J.D."/>
            <person name="Lindler L.E."/>
            <person name="Brubaker R.R."/>
            <person name="Plano G.V."/>
            <person name="Straley S.C."/>
            <person name="McDonough K.A."/>
            <person name="Nilles M.L."/>
            <person name="Matson J.S."/>
            <person name="Blattner F.R."/>
            <person name="Perry R.D."/>
        </authorList>
    </citation>
    <scope>NUCLEOTIDE SEQUENCE [LARGE SCALE GENOMIC DNA]</scope>
    <source>
        <strain>KIM10+ / Biovar Mediaevalis</strain>
    </source>
</reference>
<reference key="3">
    <citation type="journal article" date="2004" name="DNA Res.">
        <title>Complete genome sequence of Yersinia pestis strain 91001, an isolate avirulent to humans.</title>
        <authorList>
            <person name="Song Y."/>
            <person name="Tong Z."/>
            <person name="Wang J."/>
            <person name="Wang L."/>
            <person name="Guo Z."/>
            <person name="Han Y."/>
            <person name="Zhang J."/>
            <person name="Pei D."/>
            <person name="Zhou D."/>
            <person name="Qin H."/>
            <person name="Pang X."/>
            <person name="Han Y."/>
            <person name="Zhai J."/>
            <person name="Li M."/>
            <person name="Cui B."/>
            <person name="Qi Z."/>
            <person name="Jin L."/>
            <person name="Dai R."/>
            <person name="Chen F."/>
            <person name="Li S."/>
            <person name="Ye C."/>
            <person name="Du Z."/>
            <person name="Lin W."/>
            <person name="Wang J."/>
            <person name="Yu J."/>
            <person name="Yang H."/>
            <person name="Wang J."/>
            <person name="Huang P."/>
            <person name="Yang R."/>
        </authorList>
    </citation>
    <scope>NUCLEOTIDE SEQUENCE [LARGE SCALE GENOMIC DNA]</scope>
    <source>
        <strain>91001 / Biovar Mediaevalis</strain>
    </source>
</reference>
<accession>Q8ZIE9</accession>
<accession>Q0WJB2</accession>
<dbReference type="EC" id="2.4.1.227" evidence="1"/>
<dbReference type="EMBL" id="AL590842">
    <property type="protein sequence ID" value="CAL19234.1"/>
    <property type="molecule type" value="Genomic_DNA"/>
</dbReference>
<dbReference type="EMBL" id="AE009952">
    <property type="protein sequence ID" value="AAM87174.1"/>
    <property type="molecule type" value="Genomic_DNA"/>
</dbReference>
<dbReference type="EMBL" id="AE017042">
    <property type="protein sequence ID" value="AAS63777.1"/>
    <property type="molecule type" value="Genomic_DNA"/>
</dbReference>
<dbReference type="PIR" id="AH0068">
    <property type="entry name" value="AH0068"/>
</dbReference>
<dbReference type="RefSeq" id="WP_002210434.1">
    <property type="nucleotide sequence ID" value="NZ_WUCM01000081.1"/>
</dbReference>
<dbReference type="RefSeq" id="YP_002345626.1">
    <property type="nucleotide sequence ID" value="NC_003143.1"/>
</dbReference>
<dbReference type="SMR" id="Q8ZIE9"/>
<dbReference type="STRING" id="214092.YPO0555"/>
<dbReference type="CAZy" id="GT28">
    <property type="family name" value="Glycosyltransferase Family 28"/>
</dbReference>
<dbReference type="PaxDb" id="214092-YPO0555"/>
<dbReference type="DNASU" id="1148573"/>
<dbReference type="EnsemblBacteria" id="AAS63777">
    <property type="protein sequence ID" value="AAS63777"/>
    <property type="gene ID" value="YP_3629"/>
</dbReference>
<dbReference type="GeneID" id="57974060"/>
<dbReference type="KEGG" id="ype:YPO0555"/>
<dbReference type="KEGG" id="ypk:y3626"/>
<dbReference type="KEGG" id="ypm:YP_3629"/>
<dbReference type="PATRIC" id="fig|214092.21.peg.808"/>
<dbReference type="eggNOG" id="COG0707">
    <property type="taxonomic scope" value="Bacteria"/>
</dbReference>
<dbReference type="HOGENOM" id="CLU_037404_2_0_6"/>
<dbReference type="OMA" id="AADMMLC"/>
<dbReference type="OrthoDB" id="9808936at2"/>
<dbReference type="UniPathway" id="UPA00219"/>
<dbReference type="Proteomes" id="UP000000815">
    <property type="component" value="Chromosome"/>
</dbReference>
<dbReference type="Proteomes" id="UP000001019">
    <property type="component" value="Chromosome"/>
</dbReference>
<dbReference type="Proteomes" id="UP000002490">
    <property type="component" value="Chromosome"/>
</dbReference>
<dbReference type="GO" id="GO:0005886">
    <property type="term" value="C:plasma membrane"/>
    <property type="evidence" value="ECO:0007669"/>
    <property type="project" value="UniProtKB-SubCell"/>
</dbReference>
<dbReference type="GO" id="GO:0051991">
    <property type="term" value="F:UDP-N-acetyl-D-glucosamine:N-acetylmuramoyl-L-alanyl-D-glutamyl-meso-2,6-diaminopimelyl-D-alanyl-D-alanine-diphosphoundecaprenol 4-beta-N-acetylglucosaminlytransferase activity"/>
    <property type="evidence" value="ECO:0007669"/>
    <property type="project" value="RHEA"/>
</dbReference>
<dbReference type="GO" id="GO:0050511">
    <property type="term" value="F:undecaprenyldiphospho-muramoylpentapeptide beta-N-acetylglucosaminyltransferase activity"/>
    <property type="evidence" value="ECO:0000318"/>
    <property type="project" value="GO_Central"/>
</dbReference>
<dbReference type="GO" id="GO:0005975">
    <property type="term" value="P:carbohydrate metabolic process"/>
    <property type="evidence" value="ECO:0007669"/>
    <property type="project" value="InterPro"/>
</dbReference>
<dbReference type="GO" id="GO:0051301">
    <property type="term" value="P:cell division"/>
    <property type="evidence" value="ECO:0007669"/>
    <property type="project" value="UniProtKB-KW"/>
</dbReference>
<dbReference type="GO" id="GO:0071555">
    <property type="term" value="P:cell wall organization"/>
    <property type="evidence" value="ECO:0007669"/>
    <property type="project" value="UniProtKB-KW"/>
</dbReference>
<dbReference type="GO" id="GO:0030259">
    <property type="term" value="P:lipid glycosylation"/>
    <property type="evidence" value="ECO:0007669"/>
    <property type="project" value="UniProtKB-UniRule"/>
</dbReference>
<dbReference type="GO" id="GO:0009252">
    <property type="term" value="P:peptidoglycan biosynthetic process"/>
    <property type="evidence" value="ECO:0007669"/>
    <property type="project" value="UniProtKB-UniRule"/>
</dbReference>
<dbReference type="GO" id="GO:0008360">
    <property type="term" value="P:regulation of cell shape"/>
    <property type="evidence" value="ECO:0007669"/>
    <property type="project" value="UniProtKB-KW"/>
</dbReference>
<dbReference type="CDD" id="cd03785">
    <property type="entry name" value="GT28_MurG"/>
    <property type="match status" value="1"/>
</dbReference>
<dbReference type="FunFam" id="3.40.50.2000:FF:000016">
    <property type="entry name" value="UDP-N-acetylglucosamine--N-acetylmuramyl-(pentapeptide) pyrophosphoryl-undecaprenol N-acetylglucosamine transferase"/>
    <property type="match status" value="1"/>
</dbReference>
<dbReference type="FunFam" id="3.40.50.2000:FF:000018">
    <property type="entry name" value="UDP-N-acetylglucosamine--N-acetylmuramyl-(pentapeptide) pyrophosphoryl-undecaprenol N-acetylglucosamine transferase"/>
    <property type="match status" value="1"/>
</dbReference>
<dbReference type="Gene3D" id="3.40.50.2000">
    <property type="entry name" value="Glycogen Phosphorylase B"/>
    <property type="match status" value="2"/>
</dbReference>
<dbReference type="HAMAP" id="MF_00033">
    <property type="entry name" value="MurG"/>
    <property type="match status" value="1"/>
</dbReference>
<dbReference type="InterPro" id="IPR006009">
    <property type="entry name" value="GlcNAc_MurG"/>
</dbReference>
<dbReference type="InterPro" id="IPR007235">
    <property type="entry name" value="Glyco_trans_28_C"/>
</dbReference>
<dbReference type="InterPro" id="IPR004276">
    <property type="entry name" value="GlycoTrans_28_N"/>
</dbReference>
<dbReference type="NCBIfam" id="TIGR01133">
    <property type="entry name" value="murG"/>
    <property type="match status" value="1"/>
</dbReference>
<dbReference type="PANTHER" id="PTHR21015:SF22">
    <property type="entry name" value="GLYCOSYLTRANSFERASE"/>
    <property type="match status" value="1"/>
</dbReference>
<dbReference type="PANTHER" id="PTHR21015">
    <property type="entry name" value="UDP-N-ACETYLGLUCOSAMINE--N-ACETYLMURAMYL-(PENTAPEPTIDE) PYROPHOSPHORYL-UNDECAPRENOL N-ACETYLGLUCOSAMINE TRANSFERASE 1"/>
    <property type="match status" value="1"/>
</dbReference>
<dbReference type="Pfam" id="PF04101">
    <property type="entry name" value="Glyco_tran_28_C"/>
    <property type="match status" value="1"/>
</dbReference>
<dbReference type="Pfam" id="PF03033">
    <property type="entry name" value="Glyco_transf_28"/>
    <property type="match status" value="1"/>
</dbReference>
<dbReference type="SUPFAM" id="SSF53756">
    <property type="entry name" value="UDP-Glycosyltransferase/glycogen phosphorylase"/>
    <property type="match status" value="1"/>
</dbReference>
<proteinExistence type="inferred from homology"/>
<comment type="function">
    <text evidence="1">Cell wall formation. Catalyzes the transfer of a GlcNAc subunit on undecaprenyl-pyrophosphoryl-MurNAc-pentapeptide (lipid intermediate I) to form undecaprenyl-pyrophosphoryl-MurNAc-(pentapeptide)GlcNAc (lipid intermediate II).</text>
</comment>
<comment type="catalytic activity">
    <reaction evidence="1">
        <text>di-trans,octa-cis-undecaprenyl diphospho-N-acetyl-alpha-D-muramoyl-L-alanyl-D-glutamyl-meso-2,6-diaminopimeloyl-D-alanyl-D-alanine + UDP-N-acetyl-alpha-D-glucosamine = di-trans,octa-cis-undecaprenyl diphospho-[N-acetyl-alpha-D-glucosaminyl-(1-&gt;4)]-N-acetyl-alpha-D-muramoyl-L-alanyl-D-glutamyl-meso-2,6-diaminopimeloyl-D-alanyl-D-alanine + UDP + H(+)</text>
        <dbReference type="Rhea" id="RHEA:31227"/>
        <dbReference type="ChEBI" id="CHEBI:15378"/>
        <dbReference type="ChEBI" id="CHEBI:57705"/>
        <dbReference type="ChEBI" id="CHEBI:58223"/>
        <dbReference type="ChEBI" id="CHEBI:61387"/>
        <dbReference type="ChEBI" id="CHEBI:61388"/>
        <dbReference type="EC" id="2.4.1.227"/>
    </reaction>
</comment>
<comment type="pathway">
    <text evidence="1">Cell wall biogenesis; peptidoglycan biosynthesis.</text>
</comment>
<comment type="subcellular location">
    <subcellularLocation>
        <location evidence="1">Cell inner membrane</location>
        <topology evidence="1">Peripheral membrane protein</topology>
        <orientation evidence="1">Cytoplasmic side</orientation>
    </subcellularLocation>
</comment>
<comment type="similarity">
    <text evidence="1">Belongs to the glycosyltransferase 28 family. MurG subfamily.</text>
</comment>